<gene>
    <name type="primary">URA2</name>
    <name type="ordered locus">YJL130C</name>
    <name type="ORF">J0686</name>
</gene>
<evidence type="ECO:0000250" key="1">
    <source>
        <dbReference type="UniProtKB" id="P00968"/>
    </source>
</evidence>
<evidence type="ECO:0000250" key="2">
    <source>
        <dbReference type="UniProtKB" id="P08955"/>
    </source>
</evidence>
<evidence type="ECO:0000250" key="3">
    <source>
        <dbReference type="UniProtKB" id="P0A6F1"/>
    </source>
</evidence>
<evidence type="ECO:0000250" key="4">
    <source>
        <dbReference type="UniProtKB" id="P0A786"/>
    </source>
</evidence>
<evidence type="ECO:0000255" key="5">
    <source>
        <dbReference type="PROSITE-ProRule" id="PRU00409"/>
    </source>
</evidence>
<evidence type="ECO:0000255" key="6">
    <source>
        <dbReference type="PROSITE-ProRule" id="PRU00605"/>
    </source>
</evidence>
<evidence type="ECO:0000255" key="7">
    <source>
        <dbReference type="PROSITE-ProRule" id="PRU01202"/>
    </source>
</evidence>
<evidence type="ECO:0000269" key="8">
    <source>
    </source>
</evidence>
<evidence type="ECO:0000269" key="9">
    <source>
    </source>
</evidence>
<evidence type="ECO:0000269" key="10">
    <source>
    </source>
</evidence>
<evidence type="ECO:0000269" key="11">
    <source>
    </source>
</evidence>
<evidence type="ECO:0000269" key="12">
    <source>
    </source>
</evidence>
<evidence type="ECO:0000269" key="13">
    <source>
    </source>
</evidence>
<evidence type="ECO:0000269" key="14">
    <source>
    </source>
</evidence>
<evidence type="ECO:0000269" key="15">
    <source>
    </source>
</evidence>
<evidence type="ECO:0000269" key="16">
    <source>
    </source>
</evidence>
<evidence type="ECO:0000269" key="17">
    <source>
    </source>
</evidence>
<evidence type="ECO:0000269" key="18">
    <source>
    </source>
</evidence>
<evidence type="ECO:0000269" key="19">
    <source>
    </source>
</evidence>
<evidence type="ECO:0000269" key="20">
    <source>
    </source>
</evidence>
<evidence type="ECO:0000269" key="21">
    <source>
    </source>
</evidence>
<evidence type="ECO:0000269" key="22">
    <source>
    </source>
</evidence>
<evidence type="ECO:0000269" key="23">
    <source>
    </source>
</evidence>
<evidence type="ECO:0000305" key="24"/>
<evidence type="ECO:0000305" key="25">
    <source>
    </source>
</evidence>
<evidence type="ECO:0000305" key="26">
    <source>
    </source>
</evidence>
<evidence type="ECO:0000305" key="27">
    <source>
    </source>
</evidence>
<evidence type="ECO:0000305" key="28">
    <source>
    </source>
</evidence>
<evidence type="ECO:0007744" key="29">
    <source>
    </source>
</evidence>
<evidence type="ECO:0007744" key="30">
    <source>
    </source>
</evidence>
<evidence type="ECO:0007744" key="31">
    <source>
    </source>
</evidence>
<evidence type="ECO:0007744" key="32">
    <source>
    </source>
</evidence>
<evidence type="ECO:0007744" key="33">
    <source>
    </source>
</evidence>
<dbReference type="EC" id="6.3.5.5"/>
<dbReference type="EC" id="3.5.1.2"/>
<dbReference type="EC" id="6.3.4.16"/>
<dbReference type="EC" id="2.1.3.2"/>
<dbReference type="EMBL" id="M27174">
    <property type="protein sequence ID" value="AAA68280.1"/>
    <property type="molecule type" value="Genomic_DNA"/>
</dbReference>
<dbReference type="EMBL" id="Z49405">
    <property type="protein sequence ID" value="CAA89425.1"/>
    <property type="molecule type" value="Genomic_DNA"/>
</dbReference>
<dbReference type="EMBL" id="X05553">
    <property type="protein sequence ID" value="CAA29068.1"/>
    <property type="molecule type" value="Genomic_DNA"/>
</dbReference>
<dbReference type="EMBL" id="DQ881452">
    <property type="protein sequence ID" value="ABI95879.1"/>
    <property type="status" value="ALT_INIT"/>
    <property type="molecule type" value="mRNA"/>
</dbReference>
<dbReference type="EMBL" id="EF123133">
    <property type="protein sequence ID" value="ABM97477.1"/>
    <property type="molecule type" value="mRNA"/>
</dbReference>
<dbReference type="EMBL" id="X87371">
    <property type="protein sequence ID" value="CAA60825.1"/>
    <property type="molecule type" value="Genomic_DNA"/>
</dbReference>
<dbReference type="EMBL" id="D28139">
    <property type="protein sequence ID" value="BAA05680.1"/>
    <property type="molecule type" value="Genomic_DNA"/>
</dbReference>
<dbReference type="EMBL" id="J04711">
    <property type="protein sequence ID" value="AAA35198.1"/>
    <property type="molecule type" value="Genomic_DNA"/>
</dbReference>
<dbReference type="EMBL" id="BK006943">
    <property type="protein sequence ID" value="DAA08671.2"/>
    <property type="molecule type" value="Genomic_DNA"/>
</dbReference>
<dbReference type="PIR" id="S56911">
    <property type="entry name" value="QZBYU2"/>
</dbReference>
<dbReference type="RefSeq" id="NP_012405.2">
    <property type="nucleotide sequence ID" value="NM_001181563.2"/>
</dbReference>
<dbReference type="SMR" id="P07259"/>
<dbReference type="BioGRID" id="33626">
    <property type="interactions" value="219"/>
</dbReference>
<dbReference type="DIP" id="DIP-7215N"/>
<dbReference type="FunCoup" id="P07259">
    <property type="interactions" value="2184"/>
</dbReference>
<dbReference type="IntAct" id="P07259">
    <property type="interactions" value="463"/>
</dbReference>
<dbReference type="MINT" id="P07259"/>
<dbReference type="STRING" id="4932.YJL130C"/>
<dbReference type="MEROPS" id="C26.956"/>
<dbReference type="MEROPS" id="S08.056"/>
<dbReference type="CarbonylDB" id="P07259"/>
<dbReference type="GlyGen" id="P07259">
    <property type="glycosylation" value="3 sites"/>
</dbReference>
<dbReference type="iPTMnet" id="P07259"/>
<dbReference type="PaxDb" id="4932-YJL130C"/>
<dbReference type="PeptideAtlas" id="P07259"/>
<dbReference type="EnsemblFungi" id="YJL130C_mRNA">
    <property type="protein sequence ID" value="YJL130C"/>
    <property type="gene ID" value="YJL130C"/>
</dbReference>
<dbReference type="GeneID" id="853311"/>
<dbReference type="KEGG" id="sce:YJL130C"/>
<dbReference type="AGR" id="SGD:S000003666"/>
<dbReference type="SGD" id="S000003666">
    <property type="gene designation" value="URA2"/>
</dbReference>
<dbReference type="VEuPathDB" id="FungiDB:YJL130C"/>
<dbReference type="eggNOG" id="KOG0370">
    <property type="taxonomic scope" value="Eukaryota"/>
</dbReference>
<dbReference type="GeneTree" id="ENSGT00940000157241"/>
<dbReference type="HOGENOM" id="CLU_000513_2_0_1"/>
<dbReference type="InParanoid" id="P07259"/>
<dbReference type="OMA" id="WSPFNGK"/>
<dbReference type="OrthoDB" id="1924069at2759"/>
<dbReference type="BioCyc" id="MetaCyc:YJL130C-MONOMER"/>
<dbReference type="BioCyc" id="YEAST:YJL130C-MONOMER"/>
<dbReference type="BRENDA" id="6.3.5.5">
    <property type="organism ID" value="984"/>
</dbReference>
<dbReference type="Reactome" id="R-SCE-500753">
    <property type="pathway name" value="Pyrimidine biosynthesis"/>
</dbReference>
<dbReference type="UniPathway" id="UPA00070">
    <property type="reaction ID" value="UER00115"/>
</dbReference>
<dbReference type="UniPathway" id="UPA00070">
    <property type="reaction ID" value="UER00116"/>
</dbReference>
<dbReference type="BioGRID-ORCS" id="853311">
    <property type="hits" value="5 hits in 10 CRISPR screens"/>
</dbReference>
<dbReference type="CD-CODE" id="E03F929F">
    <property type="entry name" value="Stress granule"/>
</dbReference>
<dbReference type="PRO" id="PR:P07259"/>
<dbReference type="Proteomes" id="UP000002311">
    <property type="component" value="Chromosome X"/>
</dbReference>
<dbReference type="RNAct" id="P07259">
    <property type="molecule type" value="protein"/>
</dbReference>
<dbReference type="GO" id="GO:0005737">
    <property type="term" value="C:cytoplasm"/>
    <property type="evidence" value="ECO:0000314"/>
    <property type="project" value="SGD"/>
</dbReference>
<dbReference type="GO" id="GO:0005829">
    <property type="term" value="C:cytosol"/>
    <property type="evidence" value="ECO:0000318"/>
    <property type="project" value="GO_Central"/>
</dbReference>
<dbReference type="GO" id="GO:0016020">
    <property type="term" value="C:membrane"/>
    <property type="evidence" value="ECO:0000314"/>
    <property type="project" value="SGD"/>
</dbReference>
<dbReference type="GO" id="GO:0005739">
    <property type="term" value="C:mitochondrion"/>
    <property type="evidence" value="ECO:0007005"/>
    <property type="project" value="SGD"/>
</dbReference>
<dbReference type="GO" id="GO:0016597">
    <property type="term" value="F:amino acid binding"/>
    <property type="evidence" value="ECO:0007669"/>
    <property type="project" value="InterPro"/>
</dbReference>
<dbReference type="GO" id="GO:0004070">
    <property type="term" value="F:aspartate carbamoyltransferase activity"/>
    <property type="evidence" value="ECO:0000314"/>
    <property type="project" value="SGD"/>
</dbReference>
<dbReference type="GO" id="GO:0005524">
    <property type="term" value="F:ATP binding"/>
    <property type="evidence" value="ECO:0007669"/>
    <property type="project" value="UniProtKB-KW"/>
</dbReference>
<dbReference type="GO" id="GO:0004087">
    <property type="term" value="F:carbamoyl-phosphate synthase (ammonia) activity"/>
    <property type="evidence" value="ECO:0007669"/>
    <property type="project" value="RHEA"/>
</dbReference>
<dbReference type="GO" id="GO:0004088">
    <property type="term" value="F:carbamoyl-phosphate synthase (glutamine-hydrolyzing) activity"/>
    <property type="evidence" value="ECO:0000314"/>
    <property type="project" value="SGD"/>
</dbReference>
<dbReference type="GO" id="GO:0004359">
    <property type="term" value="F:glutaminase activity"/>
    <property type="evidence" value="ECO:0007669"/>
    <property type="project" value="RHEA"/>
</dbReference>
<dbReference type="GO" id="GO:0046872">
    <property type="term" value="F:metal ion binding"/>
    <property type="evidence" value="ECO:0007669"/>
    <property type="project" value="UniProtKB-KW"/>
</dbReference>
<dbReference type="GO" id="GO:0006207">
    <property type="term" value="P:'de novo' pyrimidine nucleobase biosynthetic process"/>
    <property type="evidence" value="ECO:0000314"/>
    <property type="project" value="SGD"/>
</dbReference>
<dbReference type="GO" id="GO:0044205">
    <property type="term" value="P:'de novo' UMP biosynthetic process"/>
    <property type="evidence" value="ECO:0007669"/>
    <property type="project" value="UniProtKB-UniPathway"/>
</dbReference>
<dbReference type="GO" id="GO:0006541">
    <property type="term" value="P:glutamine metabolic process"/>
    <property type="evidence" value="ECO:0000314"/>
    <property type="project" value="SGD"/>
</dbReference>
<dbReference type="GO" id="GO:0045984">
    <property type="term" value="P:negative regulation of pyrimidine nucleobase metabolic process"/>
    <property type="evidence" value="ECO:0000314"/>
    <property type="project" value="SGD"/>
</dbReference>
<dbReference type="CDD" id="cd01744">
    <property type="entry name" value="GATase1_CPSase"/>
    <property type="match status" value="1"/>
</dbReference>
<dbReference type="CDD" id="cd01423">
    <property type="entry name" value="MGS_CPS_I_III"/>
    <property type="match status" value="1"/>
</dbReference>
<dbReference type="FunFam" id="3.40.50.1370:FF:000002">
    <property type="entry name" value="Aspartate carbamoyltransferase 2"/>
    <property type="match status" value="1"/>
</dbReference>
<dbReference type="FunFam" id="3.40.50.880:FF:000025">
    <property type="entry name" value="Bifunctional pyrimidine biosynthesis protein"/>
    <property type="match status" value="1"/>
</dbReference>
<dbReference type="FunFam" id="3.40.50.1370:FF:000005">
    <property type="entry name" value="CAD protein-like isoform X1"/>
    <property type="match status" value="1"/>
</dbReference>
<dbReference type="FunFam" id="3.40.50.20:FF:000011">
    <property type="entry name" value="CAD protein-like isoform X1"/>
    <property type="match status" value="1"/>
</dbReference>
<dbReference type="FunFam" id="3.30.470.20:FF:000004">
    <property type="entry name" value="Carbamoyl-phosphate synthase (glutamine-hydrolyzing)"/>
    <property type="match status" value="1"/>
</dbReference>
<dbReference type="FunFam" id="3.50.30.20:FF:000002">
    <property type="entry name" value="Carbamoyl-phosphate synthase 1, mitochondrial"/>
    <property type="match status" value="1"/>
</dbReference>
<dbReference type="FunFam" id="1.10.1030.10:FF:000001">
    <property type="entry name" value="Carbamoyl-phosphate synthase large chain"/>
    <property type="match status" value="1"/>
</dbReference>
<dbReference type="FunFam" id="3.20.20.140:FF:000036">
    <property type="entry name" value="Carbamoyl-phosphate synthase large chain"/>
    <property type="match status" value="1"/>
</dbReference>
<dbReference type="FunFam" id="3.30.1490.20:FF:000001">
    <property type="entry name" value="Carbamoyl-phosphate synthase large chain"/>
    <property type="match status" value="1"/>
</dbReference>
<dbReference type="FunFam" id="3.30.470.20:FF:000001">
    <property type="entry name" value="Carbamoyl-phosphate synthase large chain"/>
    <property type="match status" value="1"/>
</dbReference>
<dbReference type="FunFam" id="3.40.50.20:FF:000002">
    <property type="entry name" value="Carbamoyl-phosphate synthase large chain"/>
    <property type="match status" value="1"/>
</dbReference>
<dbReference type="FunFam" id="3.40.50.1380:FF:000009">
    <property type="entry name" value="Carbamoyl-phosphate synthase, large subunit"/>
    <property type="match status" value="1"/>
</dbReference>
<dbReference type="Gene3D" id="3.40.50.20">
    <property type="match status" value="2"/>
</dbReference>
<dbReference type="Gene3D" id="3.40.50.880">
    <property type="match status" value="1"/>
</dbReference>
<dbReference type="Gene3D" id="3.40.50.1370">
    <property type="entry name" value="Aspartate/ornithine carbamoyltransferase"/>
    <property type="match status" value="2"/>
</dbReference>
<dbReference type="Gene3D" id="3.30.1490.20">
    <property type="entry name" value="ATP-grasp fold, A domain"/>
    <property type="match status" value="1"/>
</dbReference>
<dbReference type="Gene3D" id="3.30.470.20">
    <property type="entry name" value="ATP-grasp fold, B domain"/>
    <property type="match status" value="2"/>
</dbReference>
<dbReference type="Gene3D" id="3.50.30.20">
    <property type="entry name" value="Carbamoyl-phosphate synthase small subunit, N-terminal domain"/>
    <property type="match status" value="1"/>
</dbReference>
<dbReference type="Gene3D" id="1.10.1030.10">
    <property type="entry name" value="Carbamoyl-phosphate synthetase, large subunit oligomerisation domain"/>
    <property type="match status" value="1"/>
</dbReference>
<dbReference type="Gene3D" id="3.20.20.140">
    <property type="entry name" value="Metal-dependent hydrolases"/>
    <property type="match status" value="1"/>
</dbReference>
<dbReference type="Gene3D" id="3.40.50.1380">
    <property type="entry name" value="Methylglyoxal synthase-like domain"/>
    <property type="match status" value="1"/>
</dbReference>
<dbReference type="HAMAP" id="MF_00001">
    <property type="entry name" value="Asp_carb_tr"/>
    <property type="match status" value="1"/>
</dbReference>
<dbReference type="HAMAP" id="MF_01209">
    <property type="entry name" value="CPSase_S_chain"/>
    <property type="match status" value="1"/>
</dbReference>
<dbReference type="InterPro" id="IPR006132">
    <property type="entry name" value="Asp/Orn_carbamoyltranf_P-bd"/>
</dbReference>
<dbReference type="InterPro" id="IPR006130">
    <property type="entry name" value="Asp/Orn_carbamoylTrfase"/>
</dbReference>
<dbReference type="InterPro" id="IPR036901">
    <property type="entry name" value="Asp/Orn_carbamoylTrfase_sf"/>
</dbReference>
<dbReference type="InterPro" id="IPR002082">
    <property type="entry name" value="Asp_carbamoyltransf"/>
</dbReference>
<dbReference type="InterPro" id="IPR006131">
    <property type="entry name" value="Asp_carbamoyltransf_Asp/Orn-bd"/>
</dbReference>
<dbReference type="InterPro" id="IPR011761">
    <property type="entry name" value="ATP-grasp"/>
</dbReference>
<dbReference type="InterPro" id="IPR013815">
    <property type="entry name" value="ATP_grasp_subdomain_1"/>
</dbReference>
<dbReference type="InterPro" id="IPR006275">
    <property type="entry name" value="CarbamoylP_synth_lsu"/>
</dbReference>
<dbReference type="InterPro" id="IPR005480">
    <property type="entry name" value="CarbamoylP_synth_lsu_oligo"/>
</dbReference>
<dbReference type="InterPro" id="IPR036897">
    <property type="entry name" value="CarbamoylP_synth_lsu_oligo_sf"/>
</dbReference>
<dbReference type="InterPro" id="IPR006274">
    <property type="entry name" value="CarbamoylP_synth_ssu"/>
</dbReference>
<dbReference type="InterPro" id="IPR002474">
    <property type="entry name" value="CarbamoylP_synth_ssu_N"/>
</dbReference>
<dbReference type="InterPro" id="IPR036480">
    <property type="entry name" value="CarbP_synth_ssu_N_sf"/>
</dbReference>
<dbReference type="InterPro" id="IPR005479">
    <property type="entry name" value="CbamoylP_synth_lsu-like_ATP-bd"/>
</dbReference>
<dbReference type="InterPro" id="IPR005483">
    <property type="entry name" value="CbamoylP_synth_lsu_CPSase_dom"/>
</dbReference>
<dbReference type="InterPro" id="IPR029062">
    <property type="entry name" value="Class_I_gatase-like"/>
</dbReference>
<dbReference type="InterPro" id="IPR035686">
    <property type="entry name" value="CPSase_GATase1"/>
</dbReference>
<dbReference type="InterPro" id="IPR017926">
    <property type="entry name" value="GATASE"/>
</dbReference>
<dbReference type="InterPro" id="IPR032466">
    <property type="entry name" value="Metal_Hydrolase"/>
</dbReference>
<dbReference type="InterPro" id="IPR011607">
    <property type="entry name" value="MGS-like_dom"/>
</dbReference>
<dbReference type="InterPro" id="IPR036914">
    <property type="entry name" value="MGS-like_dom_sf"/>
</dbReference>
<dbReference type="InterPro" id="IPR016185">
    <property type="entry name" value="PreATP-grasp_dom_sf"/>
</dbReference>
<dbReference type="NCBIfam" id="TIGR00670">
    <property type="entry name" value="asp_carb_tr"/>
    <property type="match status" value="1"/>
</dbReference>
<dbReference type="NCBIfam" id="TIGR01369">
    <property type="entry name" value="CPSaseII_lrg"/>
    <property type="match status" value="1"/>
</dbReference>
<dbReference type="NCBIfam" id="TIGR01368">
    <property type="entry name" value="CPSaseIIsmall"/>
    <property type="match status" value="1"/>
</dbReference>
<dbReference type="NCBIfam" id="NF002032">
    <property type="entry name" value="PRK00856.1"/>
    <property type="match status" value="1"/>
</dbReference>
<dbReference type="NCBIfam" id="NF003671">
    <property type="entry name" value="PRK05294.1"/>
    <property type="match status" value="1"/>
</dbReference>
<dbReference type="NCBIfam" id="NF009455">
    <property type="entry name" value="PRK12815.1"/>
    <property type="match status" value="1"/>
</dbReference>
<dbReference type="NCBIfam" id="NF009475">
    <property type="entry name" value="PRK12838.1"/>
    <property type="match status" value="1"/>
</dbReference>
<dbReference type="PANTHER" id="PTHR11405:SF4">
    <property type="entry name" value="CARBAMOYL-PHOSPHATE SYNTHASE ARGININE-SPECIFIC SMALL CHAIN"/>
    <property type="match status" value="1"/>
</dbReference>
<dbReference type="PANTHER" id="PTHR11405">
    <property type="entry name" value="CARBAMOYLTRANSFERASE FAMILY MEMBER"/>
    <property type="match status" value="1"/>
</dbReference>
<dbReference type="Pfam" id="PF02786">
    <property type="entry name" value="CPSase_L_D2"/>
    <property type="match status" value="2"/>
</dbReference>
<dbReference type="Pfam" id="PF02787">
    <property type="entry name" value="CPSase_L_D3"/>
    <property type="match status" value="1"/>
</dbReference>
<dbReference type="Pfam" id="PF00988">
    <property type="entry name" value="CPSase_sm_chain"/>
    <property type="match status" value="1"/>
</dbReference>
<dbReference type="Pfam" id="PF00117">
    <property type="entry name" value="GATase"/>
    <property type="match status" value="1"/>
</dbReference>
<dbReference type="Pfam" id="PF02142">
    <property type="entry name" value="MGS"/>
    <property type="match status" value="1"/>
</dbReference>
<dbReference type="Pfam" id="PF00185">
    <property type="entry name" value="OTCace"/>
    <property type="match status" value="1"/>
</dbReference>
<dbReference type="Pfam" id="PF02729">
    <property type="entry name" value="OTCace_N"/>
    <property type="match status" value="1"/>
</dbReference>
<dbReference type="PRINTS" id="PR00100">
    <property type="entry name" value="AOTCASE"/>
</dbReference>
<dbReference type="PRINTS" id="PR00101">
    <property type="entry name" value="ATCASE"/>
</dbReference>
<dbReference type="PRINTS" id="PR00098">
    <property type="entry name" value="CPSASE"/>
</dbReference>
<dbReference type="PRINTS" id="PR00099">
    <property type="entry name" value="CPSGATASE"/>
</dbReference>
<dbReference type="SMART" id="SM01096">
    <property type="entry name" value="CPSase_L_D3"/>
    <property type="match status" value="1"/>
</dbReference>
<dbReference type="SMART" id="SM01097">
    <property type="entry name" value="CPSase_sm_chain"/>
    <property type="match status" value="1"/>
</dbReference>
<dbReference type="SMART" id="SM00851">
    <property type="entry name" value="MGS"/>
    <property type="match status" value="1"/>
</dbReference>
<dbReference type="SUPFAM" id="SSF53671">
    <property type="entry name" value="Aspartate/ornithine carbamoyltransferase"/>
    <property type="match status" value="1"/>
</dbReference>
<dbReference type="SUPFAM" id="SSF48108">
    <property type="entry name" value="Carbamoyl phosphate synthetase, large subunit connection domain"/>
    <property type="match status" value="1"/>
</dbReference>
<dbReference type="SUPFAM" id="SSF52021">
    <property type="entry name" value="Carbamoyl phosphate synthetase, small subunit N-terminal domain"/>
    <property type="match status" value="1"/>
</dbReference>
<dbReference type="SUPFAM" id="SSF52317">
    <property type="entry name" value="Class I glutamine amidotransferase-like"/>
    <property type="match status" value="1"/>
</dbReference>
<dbReference type="SUPFAM" id="SSF56059">
    <property type="entry name" value="Glutathione synthetase ATP-binding domain-like"/>
    <property type="match status" value="2"/>
</dbReference>
<dbReference type="SUPFAM" id="SSF51556">
    <property type="entry name" value="Metallo-dependent hydrolases"/>
    <property type="match status" value="1"/>
</dbReference>
<dbReference type="SUPFAM" id="SSF52335">
    <property type="entry name" value="Methylglyoxal synthase-like"/>
    <property type="match status" value="1"/>
</dbReference>
<dbReference type="SUPFAM" id="SSF52440">
    <property type="entry name" value="PreATP-grasp domain"/>
    <property type="match status" value="2"/>
</dbReference>
<dbReference type="PROSITE" id="PS50975">
    <property type="entry name" value="ATP_GRASP"/>
    <property type="match status" value="2"/>
</dbReference>
<dbReference type="PROSITE" id="PS00097">
    <property type="entry name" value="CARBAMOYLTRANSFERASE"/>
    <property type="match status" value="1"/>
</dbReference>
<dbReference type="PROSITE" id="PS00866">
    <property type="entry name" value="CPSASE_1"/>
    <property type="match status" value="2"/>
</dbReference>
<dbReference type="PROSITE" id="PS00867">
    <property type="entry name" value="CPSASE_2"/>
    <property type="match status" value="2"/>
</dbReference>
<dbReference type="PROSITE" id="PS51273">
    <property type="entry name" value="GATASE_TYPE_1"/>
    <property type="match status" value="1"/>
</dbReference>
<dbReference type="PROSITE" id="PS51855">
    <property type="entry name" value="MGS"/>
    <property type="match status" value="1"/>
</dbReference>
<keyword id="KW-0007">Acetylation</keyword>
<keyword id="KW-0067">ATP-binding</keyword>
<keyword id="KW-0963">Cytoplasm</keyword>
<keyword id="KW-0903">Direct protein sequencing</keyword>
<keyword id="KW-0378">Hydrolase</keyword>
<keyword id="KW-1017">Isopeptide bond</keyword>
<keyword id="KW-0436">Ligase</keyword>
<keyword id="KW-0464">Manganese</keyword>
<keyword id="KW-0479">Metal-binding</keyword>
<keyword id="KW-0511">Multifunctional enzyme</keyword>
<keyword id="KW-0547">Nucleotide-binding</keyword>
<keyword id="KW-0597">Phosphoprotein</keyword>
<keyword id="KW-0665">Pyrimidine biosynthesis</keyword>
<keyword id="KW-1185">Reference proteome</keyword>
<keyword id="KW-0677">Repeat</keyword>
<keyword id="KW-0808">Transferase</keyword>
<keyword id="KW-0832">Ubl conjugation</keyword>
<protein>
    <recommendedName>
        <fullName>Multifunctional protein URA2</fullName>
    </recommendedName>
    <alternativeName>
        <fullName>Pyrimidine-specific carbamoyl phosphate synthase-aspartate carbamoyl transferase</fullName>
        <shortName>CPSase-ATCase</shortName>
    </alternativeName>
    <domain>
        <recommendedName>
            <fullName>Glutamine-dependent carbamoyl phosphate synthase</fullName>
            <ecNumber>6.3.5.5</ecNumber>
        </recommendedName>
        <alternativeName>
            <fullName>Carbamoyl phosphate synthase P</fullName>
            <shortName>CPS-P</shortName>
            <shortName>CPSase P</shortName>
            <shortName>CPSase-ura</shortName>
        </alternativeName>
        <alternativeName>
            <fullName>Pyrimidine-specific carbamoyl phosphate synthase</fullName>
        </alternativeName>
    </domain>
    <domain>
        <recommendedName>
            <fullName>Glutamine amidotransferase</fullName>
            <shortName>GATase</shortName>
            <shortName>GLNase</shortName>
            <ecNumber>3.5.1.2</ecNumber>
        </recommendedName>
    </domain>
    <domain>
        <recommendedName>
            <fullName>Ammonium-dependent carbamoyl phosphate synthase</fullName>
            <shortName>CPS</shortName>
            <shortName>CPSase</shortName>
            <ecNumber>6.3.4.16</ecNumber>
        </recommendedName>
    </domain>
    <domain>
        <recommendedName>
            <fullName>Aspartate carbamoyltransferase</fullName>
            <shortName>ATCase</shortName>
            <ecNumber>2.1.3.2</ecNumber>
        </recommendedName>
        <alternativeName>
            <fullName>Aspartate transcarbamylase</fullName>
        </alternativeName>
    </domain>
</protein>
<reference key="1">
    <citation type="journal article" date="1989" name="Gene">
        <title>Organization of the yeast URA2 gene: identification of a defective dihydroorotase-like domain in the multifunctional carbamoylphosphate synthetase-aspartate transcarbamylase complex.</title>
        <authorList>
            <person name="Souciet J.-L."/>
            <person name="Nagy M."/>
            <person name="le Gouar M."/>
            <person name="Lacroute F."/>
            <person name="Potier S."/>
        </authorList>
    </citation>
    <scope>NUCLEOTIDE SEQUENCE [GENOMIC DNA]</scope>
    <scope>DOMAIN</scope>
    <source>
        <strain>ATCC 28383 / FL100 / VTT C-80102</strain>
    </source>
</reference>
<reference key="2">
    <citation type="journal article" date="1996" name="EMBO J.">
        <title>Complete nucleotide sequence of Saccharomyces cerevisiae chromosome X.</title>
        <authorList>
            <person name="Galibert F."/>
            <person name="Alexandraki D."/>
            <person name="Baur A."/>
            <person name="Boles E."/>
            <person name="Chalwatzis N."/>
            <person name="Chuat J.-C."/>
            <person name="Coster F."/>
            <person name="Cziepluch C."/>
            <person name="de Haan M."/>
            <person name="Domdey H."/>
            <person name="Durand P."/>
            <person name="Entian K.-D."/>
            <person name="Gatius M."/>
            <person name="Goffeau A."/>
            <person name="Grivell L.A."/>
            <person name="Hennemann A."/>
            <person name="Herbert C.J."/>
            <person name="Heumann K."/>
            <person name="Hilger F."/>
            <person name="Hollenberg C.P."/>
            <person name="Huang M.-E."/>
            <person name="Jacq C."/>
            <person name="Jauniaux J.-C."/>
            <person name="Katsoulou C."/>
            <person name="Kirchrath L."/>
            <person name="Kleine K."/>
            <person name="Kordes E."/>
            <person name="Koetter P."/>
            <person name="Liebl S."/>
            <person name="Louis E.J."/>
            <person name="Manus V."/>
            <person name="Mewes H.-W."/>
            <person name="Miosga T."/>
            <person name="Obermaier B."/>
            <person name="Perea J."/>
            <person name="Pohl T.M."/>
            <person name="Portetelle D."/>
            <person name="Pujol A."/>
            <person name="Purnelle B."/>
            <person name="Ramezani Rad M."/>
            <person name="Rasmussen S.W."/>
            <person name="Rose M."/>
            <person name="Rossau R."/>
            <person name="Schaaff-Gerstenschlaeger I."/>
            <person name="Smits P.H.M."/>
            <person name="Scarcez T."/>
            <person name="Soriano N."/>
            <person name="To Van D."/>
            <person name="Tzermia M."/>
            <person name="Van Broekhoven A."/>
            <person name="Vandenbol M."/>
            <person name="Wedler H."/>
            <person name="von Wettstein D."/>
            <person name="Wambutt R."/>
            <person name="Zagulski M."/>
            <person name="Zollner A."/>
            <person name="Karpfinger-Hartl L."/>
        </authorList>
    </citation>
    <scope>NUCLEOTIDE SEQUENCE [LARGE SCALE GENOMIC DNA]</scope>
    <source>
        <strain>ATCC 204508 / S288c</strain>
    </source>
</reference>
<reference key="3">
    <citation type="journal article" date="2014" name="G3 (Bethesda)">
        <title>The reference genome sequence of Saccharomyces cerevisiae: Then and now.</title>
        <authorList>
            <person name="Engel S.R."/>
            <person name="Dietrich F.S."/>
            <person name="Fisk D.G."/>
            <person name="Binkley G."/>
            <person name="Balakrishnan R."/>
            <person name="Costanzo M.C."/>
            <person name="Dwight S.S."/>
            <person name="Hitz B.C."/>
            <person name="Karra K."/>
            <person name="Nash R.S."/>
            <person name="Weng S."/>
            <person name="Wong E.D."/>
            <person name="Lloyd P."/>
            <person name="Skrzypek M.S."/>
            <person name="Miyasato S.R."/>
            <person name="Simison M."/>
            <person name="Cherry J.M."/>
        </authorList>
    </citation>
    <scope>GENOME REANNOTATION</scope>
    <scope>SEQUENCE REVISION TO 123</scope>
    <source>
        <strain>ATCC 204508 / S288c</strain>
    </source>
</reference>
<reference key="4">
    <citation type="journal article" date="1987" name="Mol. Gen. Genet.">
        <title>Nucleotide sequence of the pyrimidine specific carbamoyl phosphate synthetase, a part of the yeast multifunctional protein encoded by the URA2 gene.</title>
        <authorList>
            <person name="Souciet J.-L."/>
            <person name="Potier S."/>
            <person name="Hubert J.-C."/>
            <person name="Lacroute F."/>
        </authorList>
    </citation>
    <scope>NUCLEOTIDE SEQUENCE [GENOMIC DNA] OF 1-510</scope>
    <source>
        <strain>ATCC 28383 / FL100 / VTT C-80102</strain>
    </source>
</reference>
<reference key="5">
    <citation type="journal article" date="1996" name="Yeast">
        <title>Sequencing analysis of a 40.2 kb fragment of yeast chromosome X reveals 19 open reading frames including URA2 (5' end), TRK1, PBS2, SPT10, GCD14, RPE1, PHO86, NCA3, ASF1, CCT7, GZF3, two tRNA genes, three remnant delta elements and a Ty4 transposon.</title>
        <authorList>
            <person name="Cziepluch C."/>
            <person name="Kordes E."/>
            <person name="Pujol A."/>
            <person name="Jauniaux J.-C."/>
        </authorList>
    </citation>
    <scope>NUCLEOTIDE SEQUENCE [GENOMIC DNA] OF 1-276</scope>
    <source>
        <strain>ATCC 96604 / S288c / FY1679</strain>
    </source>
</reference>
<reference key="6">
    <citation type="journal article" date="2007" name="Genome Res.">
        <title>Genome-wide identification of spliced introns using a tiling microarray.</title>
        <authorList>
            <person name="Zhang Z."/>
            <person name="Hesselberth J.R."/>
            <person name="Fields S."/>
        </authorList>
    </citation>
    <scope>NUCLEOTIDE SEQUENCE [MRNA] OF 1-119</scope>
    <source>
        <strain>ATCC 201390 / BY4743</strain>
    </source>
</reference>
<reference key="7">
    <citation type="journal article" date="2007" name="Proc. Natl. Acad. Sci. U.S.A.">
        <title>High-density yeast-tiling array reveals previously undiscovered introns and extensive regulation of meiotic splicing.</title>
        <authorList>
            <person name="Juneau K."/>
            <person name="Palm C."/>
            <person name="Miranda M."/>
            <person name="Davis R.W."/>
        </authorList>
    </citation>
    <scope>NUCLEOTIDE SEQUENCE [MRNA] OF 1-117</scope>
    <source>
        <strain>ATCC 201390 / BY4743</strain>
    </source>
</reference>
<reference key="8">
    <citation type="journal article" date="1996" name="Yeast">
        <title>Sequence analysis of a 40.7 kb segment from the left arm of yeast chromosome X reveals 14 known genes and 13 new open reading frames including homologues of genes clustered on the right arm of chromosome XI.</title>
        <authorList>
            <person name="Katsoulou C."/>
            <person name="Tzermia M."/>
            <person name="Tavernarakis N."/>
            <person name="Alexandraki D."/>
        </authorList>
    </citation>
    <scope>NUCLEOTIDE SEQUENCE [GENOMIC DNA] OF 175-2214</scope>
    <source>
        <strain>ATCC 96604 / S288c / FY1679</strain>
    </source>
</reference>
<reference key="9">
    <citation type="journal article" date="1997" name="Mol. Gen. Genet.">
        <title>Screening and identification of yeast sequences that cause growth inhibition when overexpressed.</title>
        <authorList>
            <person name="Akada R."/>
            <person name="Yamamoto J."/>
            <person name="Yamashita I."/>
        </authorList>
    </citation>
    <scope>NUCLEOTIDE SEQUENCE [GENOMIC DNA] OF 838-877</scope>
</reference>
<reference key="10">
    <citation type="journal article" date="1989" name="J. Biol. Chem.">
        <title>The primary structure of the aspartate transcarbamylase region of the URA2 gene product in Saccharomyces cerevisiae. Features involved in activity and nuclear localization.</title>
        <authorList>
            <person name="Nagy M."/>
            <person name="le Gouar M."/>
            <person name="Potier S."/>
            <person name="Souciet J.-L."/>
            <person name="Herve G."/>
        </authorList>
    </citation>
    <scope>NUCLEOTIDE SEQUENCE [GENOMIC DNA] OF 1268-2214</scope>
</reference>
<reference key="11">
    <citation type="journal article" date="1990" name="Eur. J. Biochem.">
        <title>Yeast carbamoyl-phosphate-synthetase--aspartate-transcarbamylase multidomain protein is phosphorylated in vitro by cAMP-dependent protein kinase.</title>
        <authorList>
            <person name="Denis-Duphil M."/>
            <person name="Lecaer J.-P."/>
            <person name="Hardie D.G."/>
            <person name="Carrey E.A."/>
        </authorList>
    </citation>
    <scope>PROTEIN SEQUENCE OF 1855-1874</scope>
    <scope>PHOSPHORYLATION AT SER-1857</scope>
</reference>
<reference key="12">
    <citation type="journal article" date="1965" name="J. Gen. Microbiol.">
        <title>The biosynthesis of carbamoyl phosphate in Saccharomyces cerevisiae.</title>
        <authorList>
            <person name="Lacroute F."/>
            <person name="Pierard A."/>
            <person name="Grenson M."/>
            <person name="Wiame J.M."/>
        </authorList>
    </citation>
    <scope>FUNCTION</scope>
    <scope>CATALYTIC ACTIVITY</scope>
    <scope>ACTIVITY REGULATION</scope>
</reference>
<reference key="13">
    <citation type="journal article" date="1971" name="Can. J. Biochem.">
        <title>Aggregation states of a regulatory enzyme complex catalyzing the early steps of pyrimidine biosynthesis in bakers' yeast.</title>
        <authorList>
            <person name="Lue P.F."/>
            <person name="Kaplan J.G."/>
        </authorList>
    </citation>
    <scope>CATALYTIC ACTIVITY</scope>
</reference>
<reference key="14">
    <citation type="journal article" date="1973" name="Biochim. Biophys. Acta">
        <title>Characterization of the aspartate carbamoyltransferase subunit obtained from a multienzyme aggregate in the pyrimidine pathway of yeast. Activity and physical properties.</title>
        <authorList>
            <person name="Aitken D.M."/>
            <person name="Bhatti A.R."/>
            <person name="Kaplan J.G."/>
        </authorList>
    </citation>
    <scope>CATALYTIC ACTIVITY</scope>
    <scope>BIOPHYSICOCHEMICAL PROPERTIES</scope>
</reference>
<reference key="15">
    <citation type="journal article" date="1975" name="Can. J. Biochem.">
        <title>Kinetics and reaction mechanism of the carbamylphosphate synthetase of a multienzyme aggregate from yeast.</title>
        <authorList>
            <person name="Aitken D.M."/>
            <person name="Lue P.F."/>
            <person name="Kaplan J.G."/>
        </authorList>
    </citation>
    <scope>CATALYTIC ACTIVITY</scope>
</reference>
<reference key="16">
    <citation type="journal article" date="1976" name="Biochimie">
        <title>Studies of the regulation and reaction mechanism of the carbamyl phosphate synthetase and aspartate transcarbamylase of bakers' yeast.</title>
        <authorList>
            <person name="Lue P.F."/>
            <person name="Aitken D.M."/>
            <person name="Kaplan J.G."/>
        </authorList>
    </citation>
    <scope>CATALYTIC ACTIVITY</scope>
    <scope>BIOPHYSICOCHEMICAL PROPERTIES</scope>
</reference>
<reference key="17">
    <citation type="journal article" date="1983" name="Arch. Biochem. Biophys.">
        <title>In situ behavior of the pyrimidine pathway enzymes in Saccharomyces cerevisiae. I. Catalytic and regulatory properties of aspartate transcarbamylase.</title>
        <authorList>
            <person name="Penverne B."/>
            <person name="Herve G."/>
        </authorList>
    </citation>
    <scope>CATALYTIC ACTIVITY</scope>
    <scope>BIOPHYSICOCHEMICAL PROPERTIES</scope>
</reference>
<reference key="18">
    <citation type="journal article" date="1988" name="Arch. Biochem. Biophys.">
        <title>In situ behavior of the pyrimidine pathway enzymes in Saccharomyces cerevisiae. 3. Catalytic and regulatory properties of carbamylphosphate synthetase: channeling of carbamylphosphate to aspartate transcarbamylase.</title>
        <authorList>
            <person name="Belkaid M."/>
            <person name="Penverne B."/>
            <person name="Herve G."/>
        </authorList>
    </citation>
    <scope>FUNCTION</scope>
    <scope>BIOPHYSICOCHEMICAL PROPERTIES</scope>
</reference>
<reference key="19">
    <citation type="journal article" date="1993" name="Biochem. Soc. Trans.">
        <title>The carbamoyl phosphate synthetase-aspartate transcarbamoylase complex of Saccharomyces cerevisiae: molecular and cellular aspects.</title>
        <authorList>
            <person name="Herve G."/>
            <person name="Nagy M."/>
            <person name="Le Gouar M."/>
            <person name="Penverne B."/>
            <person name="Ladjimi M."/>
        </authorList>
    </citation>
    <scope>FUNCTION</scope>
</reference>
<reference key="20">
    <citation type="journal article" date="1994" name="Adv. Exp. Med. Biol.">
        <title>Evolution of the GATase, CPSase, DHOase-like, ATCase multifunctional protein in eukaryotes: genetic and molecular approaches with yeasts S. cerevisiae and S. pombe.</title>
        <authorList>
            <person name="Lollier M."/>
            <person name="Jaquet L."/>
            <person name="Nedeva T."/>
            <person name="Lacroute F."/>
            <person name="Potier S."/>
            <person name="Souciet J.L."/>
        </authorList>
    </citation>
    <scope>DOMAIN</scope>
</reference>
<reference key="21">
    <citation type="journal article" date="1994" name="Arch. Biochem. Biophys.">
        <title>In situ behavior of the pyrimidine pathway enzymes in Saccharomyces cerevisiae. 4. The channeling of carbamylphosphate to aspartate transcarbamylase and its partition in the pyrimidine and arginine pathways.</title>
        <authorList>
            <person name="Penverne B."/>
            <person name="Belkaid M."/>
            <person name="Herve G."/>
        </authorList>
    </citation>
    <scope>FUNCTION</scope>
</reference>
<reference key="22">
    <citation type="journal article" date="1998" name="FEBS Lett.">
        <title>Carbamyl-phosphate synthetase domain of the yeast multifunctional protein Ura2 is necessary for aspartate transcarbamylase inhibition by UTP.</title>
        <authorList>
            <person name="Antonelli R."/>
            <person name="Estevez L."/>
            <person name="Denis-Duphil M."/>
        </authorList>
    </citation>
    <scope>ACTIVITY REGULATION</scope>
</reference>
<reference key="23">
    <citation type="journal article" date="1999" name="J. Biol. Chem.">
        <title>Half of Saccharomyces cerevisiae carbamoyl phosphate synthetase produces and channels carbamoyl phosphate to the fused aspartate transcarbamoylase domain.</title>
        <authorList>
            <person name="Serre V."/>
            <person name="Guy H."/>
            <person name="Penverne B."/>
            <person name="Lux M."/>
            <person name="Rotgeri A."/>
            <person name="Evans D."/>
            <person name="Herve G."/>
        </authorList>
    </citation>
    <scope>FUNCTION</scope>
    <scope>ACTIVITY REGULATION</scope>
</reference>
<reference key="24">
    <citation type="journal article" date="2000" name="Yeast">
        <title>The yeast Ura2 protein that catalyses the first two steps of pyrimidines biosynthesis accumulates not in the nucleus but in the cytoplasm, as shown by immunocytochemistry and Ura2-green fluorescent protein mapping.</title>
        <authorList>
            <person name="Benoist P."/>
            <person name="Feau P."/>
            <person name="Pliss A."/>
            <person name="Vorisek J."/>
            <person name="Antonelli R."/>
            <person name="Raska I."/>
            <person name="Denis-Duphil M."/>
        </authorList>
    </citation>
    <scope>SUBCELLULAR LOCATION</scope>
</reference>
<reference key="25">
    <citation type="journal article" date="2002" name="Yeast">
        <title>Enzymatic activities of Ura2 and Ura1 proteins (aspartate carbamoyltransferase and dihydro-orotate dehydrogenase) are present in both isolated membranes and cytoplasm of Saccharomyces cerevisiae.</title>
        <authorList>
            <person name="Vorisek J."/>
            <person name="Technikova Z."/>
            <person name="Schwippel J."/>
            <person name="Benoist P."/>
        </authorList>
    </citation>
    <scope>TOPOLOGY</scope>
</reference>
<reference key="26">
    <citation type="journal article" date="2003" name="Nature">
        <title>Global analysis of protein localization in budding yeast.</title>
        <authorList>
            <person name="Huh W.-K."/>
            <person name="Falvo J.V."/>
            <person name="Gerke L.C."/>
            <person name="Carroll A.S."/>
            <person name="Howson R.W."/>
            <person name="Weissman J.S."/>
            <person name="O'Shea E.K."/>
        </authorList>
    </citation>
    <scope>SUBCELLULAR LOCATION [LARGE SCALE ANALYSIS]</scope>
</reference>
<reference key="27">
    <citation type="journal article" date="2003" name="Nature">
        <title>Global analysis of protein expression in yeast.</title>
        <authorList>
            <person name="Ghaemmaghami S."/>
            <person name="Huh W.-K."/>
            <person name="Bower K."/>
            <person name="Howson R.W."/>
            <person name="Belle A."/>
            <person name="Dephoure N."/>
            <person name="O'Shea E.K."/>
            <person name="Weissman J.S."/>
        </authorList>
    </citation>
    <scope>LEVEL OF PROTEIN EXPRESSION [LARGE SCALE ANALYSIS]</scope>
</reference>
<reference key="28">
    <citation type="journal article" date="2004" name="BMC Biochem.">
        <title>Integrated allosteric regulation in the S. cerevisiae carbamylphosphate synthetase - aspartate transcarbamylase multifunctional protein.</title>
        <authorList>
            <person name="Serre V."/>
            <person name="Penverne B."/>
            <person name="Souciet J.L."/>
            <person name="Potier S."/>
            <person name="Guy H."/>
            <person name="Evans D."/>
            <person name="Vicart P."/>
            <person name="Herve G."/>
        </authorList>
    </citation>
    <scope>FUNCTION</scope>
</reference>
<reference key="29">
    <citation type="journal article" date="2007" name="J. Proteome Res.">
        <title>Large-scale phosphorylation analysis of alpha-factor-arrested Saccharomyces cerevisiae.</title>
        <authorList>
            <person name="Li X."/>
            <person name="Gerber S.A."/>
            <person name="Rudner A.D."/>
            <person name="Beausoleil S.A."/>
            <person name="Haas W."/>
            <person name="Villen J."/>
            <person name="Elias J.E."/>
            <person name="Gygi S.P."/>
        </authorList>
    </citation>
    <scope>PHOSPHORYLATION [LARGE SCALE ANALYSIS] AT SER-1857</scope>
    <scope>IDENTIFICATION BY MASS SPECTROMETRY [LARGE SCALE ANALYSIS]</scope>
    <source>
        <strain>ADR376</strain>
    </source>
</reference>
<reference key="30">
    <citation type="journal article" date="2007" name="Proc. Natl. Acad. Sci. U.S.A.">
        <title>Analysis of phosphorylation sites on proteins from Saccharomyces cerevisiae by electron transfer dissociation (ETD) mass spectrometry.</title>
        <authorList>
            <person name="Chi A."/>
            <person name="Huttenhower C."/>
            <person name="Geer L.Y."/>
            <person name="Coon J.J."/>
            <person name="Syka J.E.P."/>
            <person name="Bai D.L."/>
            <person name="Shabanowitz J."/>
            <person name="Burke D.J."/>
            <person name="Troyanskaya O.G."/>
            <person name="Hunt D.F."/>
        </authorList>
    </citation>
    <scope>PHOSPHORYLATION [LARGE SCALE ANALYSIS] AT SER-1857</scope>
    <scope>IDENTIFICATION BY MASS SPECTROMETRY [LARGE SCALE ANALYSIS]</scope>
</reference>
<reference key="31">
    <citation type="journal article" date="2008" name="Mol. Cell. Proteomics">
        <title>A multidimensional chromatography technology for in-depth phosphoproteome analysis.</title>
        <authorList>
            <person name="Albuquerque C.P."/>
            <person name="Smolka M.B."/>
            <person name="Payne S.H."/>
            <person name="Bafna V."/>
            <person name="Eng J."/>
            <person name="Zhou H."/>
        </authorList>
    </citation>
    <scope>IDENTIFICATION BY MASS SPECTROMETRY [LARGE SCALE ANALYSIS]</scope>
</reference>
<reference key="32">
    <citation type="journal article" date="2009" name="Science">
        <title>Global analysis of Cdk1 substrate phosphorylation sites provides insights into evolution.</title>
        <authorList>
            <person name="Holt L.J."/>
            <person name="Tuch B.B."/>
            <person name="Villen J."/>
            <person name="Johnson A.D."/>
            <person name="Gygi S.P."/>
            <person name="Morgan D.O."/>
        </authorList>
    </citation>
    <scope>PHOSPHORYLATION [LARGE SCALE ANALYSIS] AT SER-1857</scope>
    <scope>IDENTIFICATION BY MASS SPECTROMETRY [LARGE SCALE ANALYSIS]</scope>
</reference>
<reference key="33">
    <citation type="journal article" date="2012" name="Proc. Natl. Acad. Sci. U.S.A.">
        <title>N-terminal acetylome analyses and functional insights of the N-terminal acetyltransferase NatB.</title>
        <authorList>
            <person name="Van Damme P."/>
            <person name="Lasa M."/>
            <person name="Polevoda B."/>
            <person name="Gazquez C."/>
            <person name="Elosegui-Artola A."/>
            <person name="Kim D.S."/>
            <person name="De Juan-Pardo E."/>
            <person name="Demeyer K."/>
            <person name="Hole K."/>
            <person name="Larrea E."/>
            <person name="Timmerman E."/>
            <person name="Prieto J."/>
            <person name="Arnesen T."/>
            <person name="Sherman F."/>
            <person name="Gevaert K."/>
            <person name="Aldabe R."/>
        </authorList>
    </citation>
    <scope>ACETYLATION [LARGE SCALE ANALYSIS] AT ALA-2</scope>
    <scope>CLEAVAGE OF INITIATOR METHIONINE [LARGE SCALE ANALYSIS]</scope>
    <scope>IDENTIFICATION BY MASS SPECTROMETRY [LARGE SCALE ANALYSIS]</scope>
</reference>
<reference key="34">
    <citation type="journal article" date="2012" name="Proteomics">
        <title>Sites of ubiquitin attachment in Saccharomyces cerevisiae.</title>
        <authorList>
            <person name="Starita L.M."/>
            <person name="Lo R.S."/>
            <person name="Eng J.K."/>
            <person name="von Haller P.D."/>
            <person name="Fields S."/>
        </authorList>
    </citation>
    <scope>UBIQUITINATION [LARGE SCALE ANALYSIS] AT LYS-1853</scope>
    <scope>IDENTIFICATION BY MASS SPECTROMETRY [LARGE SCALE ANALYSIS]</scope>
</reference>
<name>PYR1_YEAST</name>
<feature type="initiator methionine" description="Removed" evidence="33">
    <location>
        <position position="1"/>
    </location>
</feature>
<feature type="chain" id="PRO_0000199511" description="Multifunctional protein URA2">
    <location>
        <begin position="2"/>
        <end position="2214"/>
    </location>
</feature>
<feature type="domain" description="Glutamine amidotransferase type-1" evidence="6">
    <location>
        <begin position="228"/>
        <end position="413"/>
    </location>
</feature>
<feature type="domain" description="ATP-grasp 1" evidence="5">
    <location>
        <begin position="562"/>
        <end position="754"/>
    </location>
</feature>
<feature type="domain" description="ATP-grasp 2" evidence="5">
    <location>
        <begin position="1099"/>
        <end position="1290"/>
    </location>
</feature>
<feature type="domain" description="MGS-like" evidence="7">
    <location>
        <begin position="1356"/>
        <end position="1508"/>
    </location>
</feature>
<feature type="region of interest" description="GATase (Glutamine amidotransferase)" evidence="25">
    <location>
        <begin position="2"/>
        <end position="400"/>
    </location>
</feature>
<feature type="region of interest" description="Linker" evidence="25">
    <location>
        <begin position="401"/>
        <end position="440"/>
    </location>
</feature>
<feature type="region of interest" description="CPSase (Carbamoyl phosphate synthase)" evidence="25">
    <location>
        <begin position="440"/>
        <end position="1482"/>
    </location>
</feature>
<feature type="region of interest" description="CPSase A" evidence="2">
    <location>
        <begin position="440"/>
        <end position="980"/>
    </location>
</feature>
<feature type="region of interest" description="CPSase B" evidence="2">
    <location>
        <begin position="981"/>
        <end position="1482"/>
    </location>
</feature>
<feature type="region of interest" description="Linker" evidence="25">
    <location>
        <begin position="1483"/>
        <end position="1492"/>
    </location>
</feature>
<feature type="region of interest" description="Defective DHOase domain" evidence="25">
    <location>
        <begin position="1493"/>
        <end position="1821"/>
    </location>
</feature>
<feature type="region of interest" description="Linker" evidence="25">
    <location>
        <begin position="1822"/>
        <end position="1909"/>
    </location>
</feature>
<feature type="region of interest" description="ATCase (Aspartate transcarbamylase)" evidence="25">
    <location>
        <begin position="1910"/>
        <end position="2214"/>
    </location>
</feature>
<feature type="active site" description="Nucleophile; for GATase activity" evidence="6">
    <location>
        <position position="302"/>
    </location>
</feature>
<feature type="active site" description="For GATase activity" evidence="6">
    <location>
        <position position="386"/>
    </location>
</feature>
<feature type="active site" description="For GATase activity" evidence="6">
    <location>
        <position position="388"/>
    </location>
</feature>
<feature type="binding site" evidence="3">
    <location>
        <position position="64"/>
    </location>
    <ligand>
        <name>L-glutamine</name>
        <dbReference type="ChEBI" id="CHEBI:58359"/>
    </ligand>
</feature>
<feature type="binding site" evidence="3">
    <location>
        <position position="273"/>
    </location>
    <ligand>
        <name>L-glutamine</name>
        <dbReference type="ChEBI" id="CHEBI:58359"/>
    </ligand>
</feature>
<feature type="binding site" evidence="3">
    <location>
        <position position="275"/>
    </location>
    <ligand>
        <name>L-glutamine</name>
        <dbReference type="ChEBI" id="CHEBI:58359"/>
    </ligand>
</feature>
<feature type="binding site" evidence="3">
    <location>
        <position position="303"/>
    </location>
    <ligand>
        <name>L-glutamine</name>
        <dbReference type="ChEBI" id="CHEBI:58359"/>
    </ligand>
</feature>
<feature type="binding site" evidence="3">
    <location>
        <position position="306"/>
    </location>
    <ligand>
        <name>L-glutamine</name>
        <dbReference type="ChEBI" id="CHEBI:58359"/>
    </ligand>
</feature>
<feature type="binding site" evidence="3">
    <location>
        <position position="344"/>
    </location>
    <ligand>
        <name>L-glutamine</name>
        <dbReference type="ChEBI" id="CHEBI:58359"/>
    </ligand>
</feature>
<feature type="binding site" evidence="3">
    <location>
        <position position="346"/>
    </location>
    <ligand>
        <name>L-glutamine</name>
        <dbReference type="ChEBI" id="CHEBI:58359"/>
    </ligand>
</feature>
<feature type="binding site" evidence="3">
    <location>
        <position position="347"/>
    </location>
    <ligand>
        <name>L-glutamine</name>
        <dbReference type="ChEBI" id="CHEBI:58359"/>
    </ligand>
</feature>
<feature type="binding site" evidence="1">
    <location>
        <position position="558"/>
    </location>
    <ligand>
        <name>ATP</name>
        <dbReference type="ChEBI" id="CHEBI:30616"/>
        <label>1</label>
    </ligand>
</feature>
<feature type="binding site" evidence="1">
    <location>
        <position position="598"/>
    </location>
    <ligand>
        <name>ATP</name>
        <dbReference type="ChEBI" id="CHEBI:30616"/>
        <label>1</label>
    </ligand>
</feature>
<feature type="binding site" evidence="1">
    <location>
        <position position="604"/>
    </location>
    <ligand>
        <name>ATP</name>
        <dbReference type="ChEBI" id="CHEBI:30616"/>
        <label>1</label>
    </ligand>
</feature>
<feature type="binding site" evidence="1">
    <location>
        <position position="605"/>
    </location>
    <ligand>
        <name>ATP</name>
        <dbReference type="ChEBI" id="CHEBI:30616"/>
        <label>1</label>
    </ligand>
</feature>
<feature type="binding site" evidence="1">
    <location>
        <position position="635"/>
    </location>
    <ligand>
        <name>ATP</name>
        <dbReference type="ChEBI" id="CHEBI:30616"/>
        <label>1</label>
    </ligand>
</feature>
<feature type="binding site" evidence="1">
    <location>
        <position position="637"/>
    </location>
    <ligand>
        <name>ATP</name>
        <dbReference type="ChEBI" id="CHEBI:30616"/>
        <label>1</label>
    </ligand>
</feature>
<feature type="binding site" evidence="1">
    <location>
        <position position="642"/>
    </location>
    <ligand>
        <name>ATP</name>
        <dbReference type="ChEBI" id="CHEBI:30616"/>
        <label>1</label>
    </ligand>
</feature>
<feature type="binding site" evidence="1">
    <location>
        <position position="668"/>
    </location>
    <ligand>
        <name>ATP</name>
        <dbReference type="ChEBI" id="CHEBI:30616"/>
        <label>1</label>
    </ligand>
</feature>
<feature type="binding site" evidence="1">
    <location>
        <position position="669"/>
    </location>
    <ligand>
        <name>ATP</name>
        <dbReference type="ChEBI" id="CHEBI:30616"/>
        <label>1</label>
    </ligand>
</feature>
<feature type="binding site" evidence="1">
    <location>
        <position position="670"/>
    </location>
    <ligand>
        <name>ATP</name>
        <dbReference type="ChEBI" id="CHEBI:30616"/>
        <label>1</label>
    </ligand>
</feature>
<feature type="binding site" evidence="1">
    <location>
        <position position="711"/>
    </location>
    <ligand>
        <name>ATP</name>
        <dbReference type="ChEBI" id="CHEBI:30616"/>
        <label>1</label>
    </ligand>
</feature>
<feature type="binding site" evidence="5">
    <location>
        <position position="711"/>
    </location>
    <ligand>
        <name>Mg(2+)</name>
        <dbReference type="ChEBI" id="CHEBI:18420"/>
        <label>1</label>
    </ligand>
</feature>
<feature type="binding site" evidence="5">
    <location>
        <position position="711"/>
    </location>
    <ligand>
        <name>Mn(2+)</name>
        <dbReference type="ChEBI" id="CHEBI:29035"/>
        <label>1</label>
    </ligand>
</feature>
<feature type="binding site" evidence="1">
    <location>
        <position position="725"/>
    </location>
    <ligand>
        <name>ATP</name>
        <dbReference type="ChEBI" id="CHEBI:30616"/>
        <label>1</label>
    </ligand>
</feature>
<feature type="binding site" evidence="5">
    <location>
        <position position="725"/>
    </location>
    <ligand>
        <name>Mg(2+)</name>
        <dbReference type="ChEBI" id="CHEBI:18420"/>
        <label>1</label>
    </ligand>
</feature>
<feature type="binding site" evidence="5">
    <location>
        <position position="725"/>
    </location>
    <ligand>
        <name>Mg(2+)</name>
        <dbReference type="ChEBI" id="CHEBI:18420"/>
        <label>2</label>
    </ligand>
</feature>
<feature type="binding site" evidence="5">
    <location>
        <position position="725"/>
    </location>
    <ligand>
        <name>Mn(2+)</name>
        <dbReference type="ChEBI" id="CHEBI:29035"/>
        <label>1</label>
    </ligand>
</feature>
<feature type="binding site" evidence="5">
    <location>
        <position position="725"/>
    </location>
    <ligand>
        <name>Mn(2+)</name>
        <dbReference type="ChEBI" id="CHEBI:29035"/>
        <label>2</label>
    </ligand>
</feature>
<feature type="binding site" evidence="5">
    <location>
        <position position="727"/>
    </location>
    <ligand>
        <name>Mg(2+)</name>
        <dbReference type="ChEBI" id="CHEBI:18420"/>
        <label>2</label>
    </ligand>
</feature>
<feature type="binding site" evidence="5">
    <location>
        <position position="727"/>
    </location>
    <ligand>
        <name>Mn(2+)</name>
        <dbReference type="ChEBI" id="CHEBI:29035"/>
        <label>2</label>
    </ligand>
</feature>
<feature type="binding site" evidence="1">
    <location>
        <position position="1135"/>
    </location>
    <ligand>
        <name>ATP</name>
        <dbReference type="ChEBI" id="CHEBI:30616"/>
        <label>2</label>
    </ligand>
</feature>
<feature type="binding site" evidence="1">
    <location>
        <position position="1174"/>
    </location>
    <ligand>
        <name>ATP</name>
        <dbReference type="ChEBI" id="CHEBI:30616"/>
        <label>2</label>
    </ligand>
</feature>
<feature type="binding site" evidence="1">
    <location>
        <position position="1176"/>
    </location>
    <ligand>
        <name>ATP</name>
        <dbReference type="ChEBI" id="CHEBI:30616"/>
        <label>2</label>
    </ligand>
</feature>
<feature type="binding site" evidence="1">
    <location>
        <position position="1181"/>
    </location>
    <ligand>
        <name>ATP</name>
        <dbReference type="ChEBI" id="CHEBI:30616"/>
        <label>2</label>
    </ligand>
</feature>
<feature type="binding site" evidence="1">
    <location>
        <position position="1206"/>
    </location>
    <ligand>
        <name>ATP</name>
        <dbReference type="ChEBI" id="CHEBI:30616"/>
        <label>2</label>
    </ligand>
</feature>
<feature type="binding site" evidence="1">
    <location>
        <position position="1207"/>
    </location>
    <ligand>
        <name>ATP</name>
        <dbReference type="ChEBI" id="CHEBI:30616"/>
        <label>2</label>
    </ligand>
</feature>
<feature type="binding site" evidence="1">
    <location>
        <position position="1208"/>
    </location>
    <ligand>
        <name>ATP</name>
        <dbReference type="ChEBI" id="CHEBI:30616"/>
        <label>2</label>
    </ligand>
</feature>
<feature type="binding site" evidence="1">
    <location>
        <position position="1209"/>
    </location>
    <ligand>
        <name>ATP</name>
        <dbReference type="ChEBI" id="CHEBI:30616"/>
        <label>2</label>
    </ligand>
</feature>
<feature type="binding site" evidence="1">
    <location>
        <position position="1249"/>
    </location>
    <ligand>
        <name>ATP</name>
        <dbReference type="ChEBI" id="CHEBI:30616"/>
        <label>2</label>
    </ligand>
</feature>
<feature type="binding site" evidence="5">
    <location>
        <position position="1249"/>
    </location>
    <ligand>
        <name>Mg(2+)</name>
        <dbReference type="ChEBI" id="CHEBI:18420"/>
        <label>3</label>
    </ligand>
</feature>
<feature type="binding site" evidence="5">
    <location>
        <position position="1249"/>
    </location>
    <ligand>
        <name>Mn(2+)</name>
        <dbReference type="ChEBI" id="CHEBI:29035"/>
        <label>3</label>
    </ligand>
</feature>
<feature type="binding site" evidence="1">
    <location>
        <position position="1261"/>
    </location>
    <ligand>
        <name>ATP</name>
        <dbReference type="ChEBI" id="CHEBI:30616"/>
        <label>2</label>
    </ligand>
</feature>
<feature type="binding site" evidence="5">
    <location>
        <position position="1261"/>
    </location>
    <ligand>
        <name>Mg(2+)</name>
        <dbReference type="ChEBI" id="CHEBI:18420"/>
        <label>3</label>
    </ligand>
</feature>
<feature type="binding site" evidence="5">
    <location>
        <position position="1261"/>
    </location>
    <ligand>
        <name>Mg(2+)</name>
        <dbReference type="ChEBI" id="CHEBI:18420"/>
        <label>4</label>
    </ligand>
</feature>
<feature type="binding site" evidence="5">
    <location>
        <position position="1261"/>
    </location>
    <ligand>
        <name>Mn(2+)</name>
        <dbReference type="ChEBI" id="CHEBI:29035"/>
        <label>3</label>
    </ligand>
</feature>
<feature type="binding site" evidence="5">
    <location>
        <position position="1261"/>
    </location>
    <ligand>
        <name>Mn(2+)</name>
        <dbReference type="ChEBI" id="CHEBI:29035"/>
        <label>4</label>
    </ligand>
</feature>
<feature type="binding site" evidence="5">
    <location>
        <position position="1263"/>
    </location>
    <ligand>
        <name>Mg(2+)</name>
        <dbReference type="ChEBI" id="CHEBI:18420"/>
        <label>4</label>
    </ligand>
</feature>
<feature type="binding site" evidence="5">
    <location>
        <position position="1263"/>
    </location>
    <ligand>
        <name>Mn(2+)</name>
        <dbReference type="ChEBI" id="CHEBI:29035"/>
        <label>4</label>
    </ligand>
</feature>
<feature type="binding site" evidence="4">
    <location>
        <position position="1962"/>
    </location>
    <ligand>
        <name>carbamoyl phosphate</name>
        <dbReference type="ChEBI" id="CHEBI:58228"/>
    </ligand>
</feature>
<feature type="binding site" evidence="4">
    <location>
        <position position="1963"/>
    </location>
    <ligand>
        <name>carbamoyl phosphate</name>
        <dbReference type="ChEBI" id="CHEBI:58228"/>
    </ligand>
</feature>
<feature type="binding site" evidence="4">
    <location>
        <position position="1990"/>
    </location>
    <ligand>
        <name>L-aspartate</name>
        <dbReference type="ChEBI" id="CHEBI:29991"/>
    </ligand>
</feature>
<feature type="binding site" evidence="4">
    <location>
        <position position="2011"/>
    </location>
    <ligand>
        <name>carbamoyl phosphate</name>
        <dbReference type="ChEBI" id="CHEBI:58228"/>
    </ligand>
</feature>
<feature type="binding site" evidence="4">
    <location>
        <position position="2039"/>
    </location>
    <ligand>
        <name>carbamoyl phosphate</name>
        <dbReference type="ChEBI" id="CHEBI:58228"/>
    </ligand>
</feature>
<feature type="binding site" evidence="4">
    <location>
        <position position="2042"/>
    </location>
    <ligand>
        <name>carbamoyl phosphate</name>
        <dbReference type="ChEBI" id="CHEBI:58228"/>
    </ligand>
</feature>
<feature type="binding site" evidence="4">
    <location>
        <position position="2072"/>
    </location>
    <ligand>
        <name>L-aspartate</name>
        <dbReference type="ChEBI" id="CHEBI:29991"/>
    </ligand>
</feature>
<feature type="binding site" evidence="4">
    <location>
        <position position="2134"/>
    </location>
    <ligand>
        <name>L-aspartate</name>
        <dbReference type="ChEBI" id="CHEBI:29991"/>
    </ligand>
</feature>
<feature type="binding site" evidence="4">
    <location>
        <position position="2173"/>
    </location>
    <ligand>
        <name>carbamoyl phosphate</name>
        <dbReference type="ChEBI" id="CHEBI:58228"/>
    </ligand>
</feature>
<feature type="binding site" evidence="4">
    <location>
        <position position="2174"/>
    </location>
    <ligand>
        <name>carbamoyl phosphate</name>
        <dbReference type="ChEBI" id="CHEBI:58228"/>
    </ligand>
</feature>
<feature type="modified residue" description="N-acetylalanine" evidence="33">
    <location>
        <position position="2"/>
    </location>
</feature>
<feature type="modified residue" description="Phosphoserine; by PKA" evidence="15 29 30 31">
    <location>
        <position position="1857"/>
    </location>
</feature>
<feature type="cross-link" description="Glycyl lysine isopeptide (Lys-Gly) (interchain with G-Cter in ubiquitin)" evidence="32">
    <location>
        <position position="1853"/>
    </location>
</feature>
<feature type="sequence conflict" description="In Ref. 4; CAA29068." evidence="24" ref="4">
    <original>H</original>
    <variation>D</variation>
    <location>
        <position position="86"/>
    </location>
</feature>
<feature type="sequence conflict" description="In Ref. 2; CAA89425." evidence="24" ref="2">
    <original>A</original>
    <variation>R</variation>
    <location>
        <position position="123"/>
    </location>
</feature>
<feature type="sequence conflict" description="In Ref. 4; CAA29068." evidence="24" ref="4">
    <original>ELKVVPWN</original>
    <variation>RIESCSMD</variation>
    <location>
        <begin position="250"/>
        <end position="257"/>
    </location>
</feature>
<feature type="sequence conflict" description="In Ref. 4; CAA29068." evidence="24" ref="4">
    <original>I</original>
    <variation>Y</variation>
    <location>
        <position position="270"/>
    </location>
</feature>
<feature type="sequence conflict" description="In Ref. 4; CAA29068." evidence="24" ref="4">
    <original>GA</original>
    <variation>VQ</variation>
    <location>
        <begin position="313"/>
        <end position="314"/>
    </location>
</feature>
<feature type="sequence conflict" description="In Ref. 4; CAA29068." evidence="24" ref="4">
    <original>GI</original>
    <variation>RF</variation>
    <location>
        <begin position="372"/>
        <end position="373"/>
    </location>
</feature>
<feature type="sequence conflict" description="In Ref. 4; CAA29068." evidence="24" ref="4">
    <original>RDTEFLFDV</original>
    <variation>EIQNSCLT</variation>
    <location>
        <begin position="394"/>
        <end position="402"/>
    </location>
</feature>
<feature type="sequence conflict" description="In Ref. 4; CAA29068." evidence="24" ref="4">
    <original>KAH</original>
    <variation>QGT</variation>
    <location>
        <begin position="431"/>
        <end position="433"/>
    </location>
</feature>
<feature type="sequence conflict" description="In Ref. 4; CAA29068." evidence="24" ref="4">
    <original>I</original>
    <variation>T</variation>
    <location>
        <position position="482"/>
    </location>
</feature>
<feature type="sequence conflict" description="In Ref. 4; CAA29068." evidence="24" ref="4">
    <original>I</original>
    <variation>N</variation>
    <location>
        <position position="485"/>
    </location>
</feature>
<feature type="sequence conflict" description="In Ref. 4; CAA29068." evidence="24" ref="4">
    <original>A</original>
    <variation>G</variation>
    <location>
        <position position="492"/>
    </location>
</feature>
<feature type="sequence conflict" description="In Ref. 4; CAA29068." evidence="24" ref="4">
    <original>TAEFVRKVIL</original>
    <variation>NAAKQRDVDR</variation>
    <location>
        <begin position="501"/>
        <end position="510"/>
    </location>
</feature>
<feature type="sequence conflict" description="In Ref. 10; AAA35198." evidence="24" ref="10">
    <original>EV</original>
    <variation>S</variation>
    <location>
        <begin position="1411"/>
        <end position="1412"/>
    </location>
</feature>
<feature type="sequence conflict" description="In Ref. 10; AAA35198." evidence="24" ref="10">
    <original>I</original>
    <variation>M</variation>
    <location>
        <position position="1582"/>
    </location>
</feature>
<feature type="sequence conflict" description="In Ref. 10; AAA35198." evidence="24" ref="10">
    <original>N</original>
    <variation>K</variation>
    <location>
        <position position="1588"/>
    </location>
</feature>
<feature type="sequence conflict" description="In Ref. 10; AAA35198." evidence="24" ref="10">
    <original>V</original>
    <variation>G</variation>
    <location>
        <position position="1592"/>
    </location>
</feature>
<feature type="sequence conflict" description="In Ref. 10; AAA35198." evidence="24" ref="10">
    <original>S</original>
    <variation>A</variation>
    <location>
        <position position="1595"/>
    </location>
</feature>
<feature type="sequence conflict" description="In Ref. 11; AA sequence." evidence="24" ref="11">
    <location>
        <position position="1872"/>
    </location>
</feature>
<feature type="sequence conflict" description="In Ref. 1; AAA68280 and 10; AAA35198." evidence="24" ref="1 10">
    <original>A</original>
    <variation>R</variation>
    <location>
        <position position="1937"/>
    </location>
</feature>
<feature type="sequence conflict" description="In Ref. 10; AAA35198." evidence="24" ref="10">
    <original>T</original>
    <variation>I</variation>
    <location>
        <position position="1997"/>
    </location>
</feature>
<feature type="sequence conflict" description="In Ref. 10; AAA35198." evidence="24" ref="10">
    <original>H</original>
    <variation>L</variation>
    <location>
        <position position="2039"/>
    </location>
</feature>
<feature type="sequence conflict" description="In Ref. 10; AAA35198." evidence="24" ref="10">
    <original>KILAHAKE</original>
    <variation>VRSWHTQQK</variation>
    <location>
        <begin position="2158"/>
        <end position="2165"/>
    </location>
</feature>
<comment type="function">
    <text evidence="8 13 17 20 22">Multifunctional protein that encodes the first 2 enzymatic activities of the de novo pyrimidine pathway: carbamoylphosphate synthetase (CPSase; EC 6.3.5.5) and aspartate transcarbamylase (ATCase; EC 2.1.3.2). The CPSase-function is accomplished in 2 steps, by a glutamine-dependent amidotransferase activity (GATase) that binds and cleaves glutamine to produce ammonia, followed by an ammonium-dependent carbamoyl phosphate synthetase, which reacts with the ammonia, hydrogencarbonate and ATP to form carbamoyl phosphate. The endogenously produced carbamoyl phosphate is sequestered and channeled to the ATCase active site. ATCase then catalyzes the formation of carbamoyl-L-aspartate from L-aspartate and carbamoyl phosphate.</text>
</comment>
<comment type="catalytic activity">
    <reaction evidence="14 16 19 26">
        <text>hydrogencarbonate + L-glutamine + 2 ATP + H2O = carbamoyl phosphate + L-glutamate + 2 ADP + phosphate + 2 H(+)</text>
        <dbReference type="Rhea" id="RHEA:18633"/>
        <dbReference type="ChEBI" id="CHEBI:15377"/>
        <dbReference type="ChEBI" id="CHEBI:15378"/>
        <dbReference type="ChEBI" id="CHEBI:17544"/>
        <dbReference type="ChEBI" id="CHEBI:29985"/>
        <dbReference type="ChEBI" id="CHEBI:30616"/>
        <dbReference type="ChEBI" id="CHEBI:43474"/>
        <dbReference type="ChEBI" id="CHEBI:58228"/>
        <dbReference type="ChEBI" id="CHEBI:58359"/>
        <dbReference type="ChEBI" id="CHEBI:456216"/>
        <dbReference type="EC" id="6.3.5.5"/>
    </reaction>
</comment>
<comment type="catalytic activity">
    <reaction evidence="26">
        <text>L-glutamine + H2O = L-glutamate + NH4(+)</text>
        <dbReference type="Rhea" id="RHEA:15889"/>
        <dbReference type="ChEBI" id="CHEBI:15377"/>
        <dbReference type="ChEBI" id="CHEBI:28938"/>
        <dbReference type="ChEBI" id="CHEBI:29985"/>
        <dbReference type="ChEBI" id="CHEBI:58359"/>
        <dbReference type="EC" id="3.5.1.2"/>
    </reaction>
</comment>
<comment type="catalytic activity">
    <reaction evidence="16 17 26">
        <text>hydrogencarbonate + NH4(+) + 2 ATP = carbamoyl phosphate + 2 ADP + phosphate + 2 H(+)</text>
        <dbReference type="Rhea" id="RHEA:18029"/>
        <dbReference type="ChEBI" id="CHEBI:15378"/>
        <dbReference type="ChEBI" id="CHEBI:17544"/>
        <dbReference type="ChEBI" id="CHEBI:28938"/>
        <dbReference type="ChEBI" id="CHEBI:30616"/>
        <dbReference type="ChEBI" id="CHEBI:43474"/>
        <dbReference type="ChEBI" id="CHEBI:58228"/>
        <dbReference type="ChEBI" id="CHEBI:456216"/>
        <dbReference type="EC" id="6.3.4.16"/>
    </reaction>
</comment>
<comment type="catalytic activity">
    <reaction evidence="18 19 21">
        <text>carbamoyl phosphate + L-aspartate = N-carbamoyl-L-aspartate + phosphate + H(+)</text>
        <dbReference type="Rhea" id="RHEA:20013"/>
        <dbReference type="ChEBI" id="CHEBI:15378"/>
        <dbReference type="ChEBI" id="CHEBI:29991"/>
        <dbReference type="ChEBI" id="CHEBI:32814"/>
        <dbReference type="ChEBI" id="CHEBI:43474"/>
        <dbReference type="ChEBI" id="CHEBI:58228"/>
        <dbReference type="EC" id="2.1.3.2"/>
    </reaction>
</comment>
<comment type="cofactor">
    <cofactor evidence="5">
        <name>Mg(2+)</name>
        <dbReference type="ChEBI" id="CHEBI:18420"/>
    </cofactor>
    <cofactor evidence="5">
        <name>Mn(2+)</name>
        <dbReference type="ChEBI" id="CHEBI:29035"/>
    </cofactor>
    <text evidence="5">Binds 4 Mg(2+) or Mn(2+) ions per subunit.</text>
</comment>
<comment type="activity regulation">
    <text evidence="8 23">Both CPSase and ATCase activities are feedback inhibited by the end product UTP.</text>
</comment>
<comment type="biophysicochemical properties">
    <kinetics>
        <KM evidence="17">30 mM for NH4(+)</KM>
        <KM evidence="14">0.5 mM for glutamine</KM>
        <KM evidence="14">3 mM for hydrogencarbonate</KM>
        <KM evidence="18 21">16.6 mM for aspartate</KM>
        <KM evidence="18 21">1.18 mM for carbamoyl phosphate</KM>
    </kinetics>
    <phDependence>
        <text evidence="17 18">Optimum pH is 7 (for the CPSase reaction) (PubMed:3281587). Optimum pH is 8-9 (fro the ATCase reaction) (PubMed:4575349).</text>
    </phDependence>
</comment>
<comment type="pathway">
    <text evidence="26">Pyrimidine metabolism; UMP biosynthesis via de novo pathway; (S)-dihydroorotate from bicarbonate: step 1/3.</text>
</comment>
<comment type="pathway">
    <text evidence="26">Pyrimidine metabolism; UMP biosynthesis via de novo pathway; (S)-dihydroorotate from bicarbonate: step 2/3.</text>
</comment>
<comment type="interaction">
    <interactant intactId="EBI-14372">
        <id>P07259</id>
    </interactant>
    <interactant intactId="EBI-5429">
        <id>P53691</id>
        <label>CPR6</label>
    </interactant>
    <organismsDiffer>false</organismsDiffer>
    <experiments>2</experiments>
</comment>
<comment type="subcellular location">
    <subcellularLocation>
        <location evidence="9 11">Cytoplasm</location>
    </subcellularLocation>
    <text evidence="10">Associates with membranes.</text>
</comment>
<comment type="domain">
    <text evidence="25 27">The DHOase domain is defective. The third step of the de novo pyrimidine pathway, dihydroorotase (DHOase) is encoded by the URA4 gene which is both physically and genetically independent of the URA2 gene.</text>
</comment>
<comment type="miscellaneous">
    <text evidence="25">GATase (glutamine amidotransferase) and CPSase (carbamoyl phosphate synthase) form together the glutamine-dependent CPSase (CPSase P) (EC 6.3.5.5).</text>
</comment>
<comment type="miscellaneous">
    <text evidence="26 28">In S.cerevisiae, carbamoyl phosphate synthase is synthesized by 2 pathway-specific (arginine and pyrimidine) genes under separate control. One is linked to the arginine pathway and is designated CPSase A (CPA1-CPA2); it is repressed by arginine. A second one, CPSase P, is part of a multifunctional protein (URA3) encoding 3 enzymatic activities of the pyrimidine pathway (GATase, CPSase, and ATCase); it is feedback inhibited and repressed by pyrimidines. The 2 synthases appear to contribute to the formation of a single cellular pool of carbamoyl phosphate, in contrast to Schizosaccharomyces pombe and Neurospora crassa, in which the arginine pathway CPSase is localized in mitochondria and the carbamoyl phosphate synthesized by each synthase is channeled to its respective pathway.</text>
</comment>
<comment type="miscellaneous">
    <text evidence="12">Present with 11000 molecules/cell in log phase SD medium.</text>
</comment>
<comment type="similarity">
    <text evidence="24">In the N-terminal section; belongs to the CarA family.</text>
</comment>
<comment type="similarity">
    <text evidence="24">In the 2nd section; belongs to the CarB family.</text>
</comment>
<comment type="similarity">
    <text evidence="24">In the 3rd section; belongs to the metallo-dependent hydrolases superfamily. DHOase family. CAD subfamily.</text>
</comment>
<comment type="similarity">
    <text evidence="24">In the C-terminal section; belongs to the aspartate/ornithine carbamoyltransferase superfamily. ATCase family.</text>
</comment>
<comment type="sequence caution" evidence="24">
    <conflict type="erroneous initiation">
        <sequence resource="EMBL-CDS" id="ABI95879"/>
    </conflict>
    <text>Truncated N-terminus.</text>
</comment>
<proteinExistence type="evidence at protein level"/>
<accession>P07259</accession>
<accession>A2TBN0</accession>
<accession>D6VW55</accession>
<accession>Q06HN1</accession>
<organism>
    <name type="scientific">Saccharomyces cerevisiae (strain ATCC 204508 / S288c)</name>
    <name type="common">Baker's yeast</name>
    <dbReference type="NCBI Taxonomy" id="559292"/>
    <lineage>
        <taxon>Eukaryota</taxon>
        <taxon>Fungi</taxon>
        <taxon>Dikarya</taxon>
        <taxon>Ascomycota</taxon>
        <taxon>Saccharomycotina</taxon>
        <taxon>Saccharomycetes</taxon>
        <taxon>Saccharomycetales</taxon>
        <taxon>Saccharomycetaceae</taxon>
        <taxon>Saccharomyces</taxon>
    </lineage>
</organism>
<sequence length="2214" mass="245041">MATIAPTAPITPPMESTGDRLVTLELKDGTVLQGYSFGAEKSVAGELVFQTGMVGYPESVTDPSYEGQILVITYPLVGNYGVPDMHLRDELVEELPRYFESNRIHIAGLVISHYTDEYSHYLAKSSLGKWLQNEGIPAVYGVDTRSLTKHLRDAGSMLGRLSLEKSGSDRTISRSSSWRSAFDVPEWVDPNVQNLVSKVSINEPKLYVPPADNKHIELQTGPDGKVLRILAIDVGMKYNQIRCFIKRGVELKVVPWNYDFTKEDYDGLFISNGPGDPSVLDDLSQRLSNVLEAKKTPVFGICLGHQLIARAAGASTLKLKFGNRGHNIPCTSTISGRCYITSQNHGFAVDVDTLTSGWKPLFVNANDDSNEGIYHSELPYFSVQFHPESTPGPRDTEFLFDVFIQAVKEFKYTQVLKPIAFPGGLLEDNVKAHPRIEAKKVLVLGSGGLSIGQAGEFDYSGSQAIKALKEEGIYTILINPNIATIQTSKGLADKVYFVPVTAEFVRKVILHERPDAIYVTFGGQTALSVGIAMKDEFEALGVKVLGTPIDTIITTEDRELFSNAIDEINEKCAKSQAANSVDEALAAVKEIGFPVIVRAAYALGGLGSGFANNEKELVDLCNVAFSSSPQVLVEKSMKGWKEVEYEVVRDAFDNCITVCNMENFDPLGIHTGDSIVVAPSQTLSDEDYNMLRTTAVNVIRHLGVVGECNIQYALNPVSKDYCIIEVNARLSRSSALASKATGYPLAYTAAKLGLNIPLNEVKNSVTKSTCACFEPSLDYCVVKMPRWDLKKFTRVSTELSSSMKSVGEVMSIGRTFEEAIQKAIRSTEYANLGFNETDLDIDIDYELNNPTDMRVFAIANAFAKKGYSVDKVWEMTRIDKWFLNKLHDLVQFAEKISSFGTKEELPSLVLRQAKQLGFDDRQIARFLDSNEVAIRRLRKEYGITPFVKQIDTVAAEFPAYTNYLYMTYNADSHDLSFDDHGVMVLGSGVYRIGSSVEFDWCAVTAVRTLRANNIKTIMVNYNPETVSTDYDEADRLYFETINLERVLDIYEIENSSGVVVSMGGQTSNNIAMTLHRENVKILGTSPDMIDSAENRYKFSRMLDQIGVDQPAWKELTSMDEAESFAEKVGYPVLVRPSYVLSGAAMNTVYSKNDLESYLNQAVEVSRDYPVVITKYIENAKEIEMDAVARNGELVMHVVSEHVENAGVHSGDATLIVPPQDLAPETVDRIVVATAKIGKALKITGPYNIQFIAKDNEIKVIECNVRASRSFPFISKVVGVNLIELATKAIMGLPLTPYPVEKLPDDYVAVKVPQFSFPRLAGADPVLGVEMASTGEVATFGHSKYEAYLKSLLATGFKLPKKNILLSIGSYKEKQELLSSVQKLYNMGYKLFATSGTADFLSEHGIAVQYLEVLNKDDDDQKSEYSLTQHLANNEIDLYINLPSANRFRRPASYVSKGYKTRRLAVDYSVPLVTNVKCAKLLIEAISRNITLDVSERDAQTSHRTITLPGLINIATYVPNASHVIKGPAELKETTRLFLESGFTYCQLMPRSISGPVITDVASLKAANSVSQDSSYTDFSFTIAGTAHNAHSVTQSASKVTALFLPLRELKNKITAVAELLNQWPTEKQVIAEAKTADLASVLLLTSLQNRSIHITGVSNKEDLALIMTVKAKDPRVTCDVNIYSLFIAQDDYPEAVFLPTKEDQEFFWNNLDSIDAFSVGALPVALANVTGNKVDVGMGIKDSLPLLLAAVEEGKLTIDDIVLRLHDNPAKIFNIPTQDSVVEIDLDYSFRRNKRWSPFNKDMNGGIERVVYNGETLVLSGELVSPGAKGKCIVNPSPASITASAELQSTSAKRRFSITEEAIADNLDAAEDAIPEQPLEQKLMSSRPPRELVAPGAIQNLIRSNNPFRGRHILSIKQFKRSDFHVLFAVAQELRAAVAREGVLDLMKGHVITTIFFEPSTRTCSSFIAAMERLGGRIVNVNPLVSSVKKGETLQDTIRTLACYSDAIVMRHSEEMSVHIAAKYSPVPIINGGNGSREHPTQAFLDLFTIREEIGTVNGITVTFMGDLKHGRTVHSLCRLLMHYQVRINLVSPPELRLPEGLREELRKAGLLGVESIELTPHIISKTDVLYCTRVQEERFNSPEEYARLKDTYIVDNKILAHAKENMAIMHPLPRVNEIKEEVDYDHRAAYFRQMKYGLFVRMALLAMVMGVDM</sequence>